<evidence type="ECO:0000250" key="1">
    <source>
        <dbReference type="UniProtKB" id="Q9NZS9"/>
    </source>
</evidence>
<evidence type="ECO:0000255" key="2"/>
<evidence type="ECO:0000255" key="3">
    <source>
        <dbReference type="PROSITE-ProRule" id="PRU00175"/>
    </source>
</evidence>
<evidence type="ECO:0000255" key="4">
    <source>
        <dbReference type="PROSITE-ProRule" id="PRU00184"/>
    </source>
</evidence>
<evidence type="ECO:0000256" key="5">
    <source>
        <dbReference type="SAM" id="MobiDB-lite"/>
    </source>
</evidence>
<organism>
    <name type="scientific">Rattus norvegicus</name>
    <name type="common">Rat</name>
    <dbReference type="NCBI Taxonomy" id="10116"/>
    <lineage>
        <taxon>Eukaryota</taxon>
        <taxon>Metazoa</taxon>
        <taxon>Chordata</taxon>
        <taxon>Craniata</taxon>
        <taxon>Vertebrata</taxon>
        <taxon>Euteleostomi</taxon>
        <taxon>Mammalia</taxon>
        <taxon>Eutheria</taxon>
        <taxon>Euarchontoglires</taxon>
        <taxon>Glires</taxon>
        <taxon>Rodentia</taxon>
        <taxon>Myomorpha</taxon>
        <taxon>Muroidea</taxon>
        <taxon>Muridae</taxon>
        <taxon>Murinae</taxon>
        <taxon>Rattus</taxon>
    </lineage>
</organism>
<reference key="1">
    <citation type="journal article" date="2004" name="Genome Res.">
        <title>The status, quality, and expansion of the NIH full-length cDNA project: the Mammalian Gene Collection (MGC).</title>
        <authorList>
            <consortium name="The MGC Project Team"/>
        </authorList>
    </citation>
    <scope>NUCLEOTIDE SEQUENCE [LARGE SCALE MRNA]</scope>
    <source>
        <tissue>Heart</tissue>
    </source>
</reference>
<keyword id="KW-0053">Apoptosis</keyword>
<keyword id="KW-0256">Endoplasmic reticulum</keyword>
<keyword id="KW-0325">Glycoprotein</keyword>
<keyword id="KW-0472">Membrane</keyword>
<keyword id="KW-0479">Metal-binding</keyword>
<keyword id="KW-1185">Reference proteome</keyword>
<keyword id="KW-0808">Transferase</keyword>
<keyword id="KW-0812">Transmembrane</keyword>
<keyword id="KW-1133">Transmembrane helix</keyword>
<keyword id="KW-0832">Ubl conjugation</keyword>
<keyword id="KW-0862">Zinc</keyword>
<keyword id="KW-0863">Zinc-finger</keyword>
<proteinExistence type="evidence at transcript level"/>
<accession>Q5PQN2</accession>
<dbReference type="EC" id="2.3.2.27" evidence="1"/>
<dbReference type="EMBL" id="BC087103">
    <property type="protein sequence ID" value="AAH87103.1"/>
    <property type="molecule type" value="mRNA"/>
</dbReference>
<dbReference type="RefSeq" id="NP_001013143.1">
    <property type="nucleotide sequence ID" value="NM_001013125.2"/>
</dbReference>
<dbReference type="RefSeq" id="XP_063125336.1">
    <property type="nucleotide sequence ID" value="XM_063269266.1"/>
</dbReference>
<dbReference type="SMR" id="Q5PQN2"/>
<dbReference type="FunCoup" id="Q5PQN2">
    <property type="interactions" value="2348"/>
</dbReference>
<dbReference type="STRING" id="10116.ENSRNOP00000004217"/>
<dbReference type="GlyCosmos" id="Q5PQN2">
    <property type="glycosylation" value="1 site, No reported glycans"/>
</dbReference>
<dbReference type="GlyGen" id="Q5PQN2">
    <property type="glycosylation" value="1 site"/>
</dbReference>
<dbReference type="PhosphoSitePlus" id="Q5PQN2"/>
<dbReference type="PaxDb" id="10116-ENSRNOP00000004217"/>
<dbReference type="Ensembl" id="ENSRNOT00000004217.9">
    <property type="protein sequence ID" value="ENSRNOP00000004217.6"/>
    <property type="gene ID" value="ENSRNOG00000003151.9"/>
</dbReference>
<dbReference type="GeneID" id="304709"/>
<dbReference type="KEGG" id="rno:304709"/>
<dbReference type="UCSC" id="RGD:1304791">
    <property type="organism name" value="rat"/>
</dbReference>
<dbReference type="AGR" id="RGD:1304791"/>
<dbReference type="CTD" id="51283"/>
<dbReference type="RGD" id="1304791">
    <property type="gene designation" value="Bfar"/>
</dbReference>
<dbReference type="eggNOG" id="KOG4159">
    <property type="taxonomic scope" value="Eukaryota"/>
</dbReference>
<dbReference type="GeneTree" id="ENSGT00390000005386"/>
<dbReference type="HOGENOM" id="CLU_057444_0_0_1"/>
<dbReference type="InParanoid" id="Q5PQN2"/>
<dbReference type="OMA" id="GNDQMPT"/>
<dbReference type="OrthoDB" id="6105938at2759"/>
<dbReference type="PhylomeDB" id="Q5PQN2"/>
<dbReference type="PRO" id="PR:Q5PQN2"/>
<dbReference type="Proteomes" id="UP000002494">
    <property type="component" value="Chromosome 10"/>
</dbReference>
<dbReference type="Bgee" id="ENSRNOG00000003151">
    <property type="expression patterns" value="Expressed in heart and 20 other cell types or tissues"/>
</dbReference>
<dbReference type="GO" id="GO:0005783">
    <property type="term" value="C:endoplasmic reticulum"/>
    <property type="evidence" value="ECO:0000266"/>
    <property type="project" value="RGD"/>
</dbReference>
<dbReference type="GO" id="GO:0005789">
    <property type="term" value="C:endoplasmic reticulum membrane"/>
    <property type="evidence" value="ECO:0007669"/>
    <property type="project" value="UniProtKB-SubCell"/>
</dbReference>
<dbReference type="GO" id="GO:0016020">
    <property type="term" value="C:membrane"/>
    <property type="evidence" value="ECO:0000266"/>
    <property type="project" value="RGD"/>
</dbReference>
<dbReference type="GO" id="GO:0089720">
    <property type="term" value="F:caspase binding"/>
    <property type="evidence" value="ECO:0000266"/>
    <property type="project" value="RGD"/>
</dbReference>
<dbReference type="GO" id="GO:0030674">
    <property type="term" value="F:protein-macromolecule adaptor activity"/>
    <property type="evidence" value="ECO:0000266"/>
    <property type="project" value="RGD"/>
</dbReference>
<dbReference type="GO" id="GO:0061630">
    <property type="term" value="F:ubiquitin protein ligase activity"/>
    <property type="evidence" value="ECO:0000266"/>
    <property type="project" value="RGD"/>
</dbReference>
<dbReference type="GO" id="GO:0008270">
    <property type="term" value="F:zinc ion binding"/>
    <property type="evidence" value="ECO:0007669"/>
    <property type="project" value="UniProtKB-KW"/>
</dbReference>
<dbReference type="GO" id="GO:0006915">
    <property type="term" value="P:apoptotic process"/>
    <property type="evidence" value="ECO:0007669"/>
    <property type="project" value="UniProtKB-KW"/>
</dbReference>
<dbReference type="GO" id="GO:0043066">
    <property type="term" value="P:negative regulation of apoptotic process"/>
    <property type="evidence" value="ECO:0000266"/>
    <property type="project" value="RGD"/>
</dbReference>
<dbReference type="GO" id="GO:1903895">
    <property type="term" value="P:negative regulation of IRE1-mediated unfolded protein response"/>
    <property type="evidence" value="ECO:0000266"/>
    <property type="project" value="RGD"/>
</dbReference>
<dbReference type="GO" id="GO:0043161">
    <property type="term" value="P:proteasome-mediated ubiquitin-dependent protein catabolic process"/>
    <property type="evidence" value="ECO:0000266"/>
    <property type="project" value="RGD"/>
</dbReference>
<dbReference type="GO" id="GO:0051865">
    <property type="term" value="P:protein autoubiquitination"/>
    <property type="evidence" value="ECO:0000266"/>
    <property type="project" value="RGD"/>
</dbReference>
<dbReference type="GO" id="GO:0070936">
    <property type="term" value="P:protein K48-linked ubiquitination"/>
    <property type="evidence" value="ECO:0000266"/>
    <property type="project" value="RGD"/>
</dbReference>
<dbReference type="GO" id="GO:0070534">
    <property type="term" value="P:protein K63-linked ubiquitination"/>
    <property type="evidence" value="ECO:0000266"/>
    <property type="project" value="RGD"/>
</dbReference>
<dbReference type="GO" id="GO:0000209">
    <property type="term" value="P:protein polyubiquitination"/>
    <property type="evidence" value="ECO:0000266"/>
    <property type="project" value="RGD"/>
</dbReference>
<dbReference type="GO" id="GO:0006511">
    <property type="term" value="P:ubiquitin-dependent protein catabolic process"/>
    <property type="evidence" value="ECO:0000266"/>
    <property type="project" value="RGD"/>
</dbReference>
<dbReference type="CDD" id="cd16497">
    <property type="entry name" value="RING-HC_BAR"/>
    <property type="match status" value="1"/>
</dbReference>
<dbReference type="CDD" id="cd09513">
    <property type="entry name" value="SAM_BAR"/>
    <property type="match status" value="1"/>
</dbReference>
<dbReference type="FunFam" id="1.10.150.50:FF:000053">
    <property type="entry name" value="Bifunctional apoptosis regulator"/>
    <property type="match status" value="1"/>
</dbReference>
<dbReference type="FunFam" id="3.30.40.10:FF:000331">
    <property type="entry name" value="Bifunctional apoptosis regulator"/>
    <property type="match status" value="1"/>
</dbReference>
<dbReference type="Gene3D" id="1.10.150.50">
    <property type="entry name" value="Transcription Factor, Ets-1"/>
    <property type="match status" value="1"/>
</dbReference>
<dbReference type="Gene3D" id="3.30.40.10">
    <property type="entry name" value="Zinc/RING finger domain, C3HC4 (zinc finger)"/>
    <property type="match status" value="1"/>
</dbReference>
<dbReference type="InterPro" id="IPR001660">
    <property type="entry name" value="SAM"/>
</dbReference>
<dbReference type="InterPro" id="IPR013761">
    <property type="entry name" value="SAM/pointed_sf"/>
</dbReference>
<dbReference type="InterPro" id="IPR001841">
    <property type="entry name" value="Znf_RING"/>
</dbReference>
<dbReference type="InterPro" id="IPR013083">
    <property type="entry name" value="Znf_RING/FYVE/PHD"/>
</dbReference>
<dbReference type="InterPro" id="IPR017907">
    <property type="entry name" value="Znf_RING_CS"/>
</dbReference>
<dbReference type="PANTHER" id="PTHR15898">
    <property type="entry name" value="BIFUNCTIONAL APOPTOSIS REGULATOR"/>
    <property type="match status" value="1"/>
</dbReference>
<dbReference type="PANTHER" id="PTHR15898:SF13">
    <property type="entry name" value="BIFUNCTIONAL APOPTOSIS REGULATOR"/>
    <property type="match status" value="1"/>
</dbReference>
<dbReference type="Pfam" id="PF00536">
    <property type="entry name" value="SAM_1"/>
    <property type="match status" value="1"/>
</dbReference>
<dbReference type="Pfam" id="PF15227">
    <property type="entry name" value="zf-C3HC4_4"/>
    <property type="match status" value="1"/>
</dbReference>
<dbReference type="SMART" id="SM00184">
    <property type="entry name" value="RING"/>
    <property type="match status" value="1"/>
</dbReference>
<dbReference type="SMART" id="SM00454">
    <property type="entry name" value="SAM"/>
    <property type="match status" value="1"/>
</dbReference>
<dbReference type="SUPFAM" id="SSF57850">
    <property type="entry name" value="RING/U-box"/>
    <property type="match status" value="1"/>
</dbReference>
<dbReference type="SUPFAM" id="SSF47769">
    <property type="entry name" value="SAM/Pointed domain"/>
    <property type="match status" value="1"/>
</dbReference>
<dbReference type="PROSITE" id="PS50105">
    <property type="entry name" value="SAM_DOMAIN"/>
    <property type="match status" value="1"/>
</dbReference>
<dbReference type="PROSITE" id="PS00518">
    <property type="entry name" value="ZF_RING_1"/>
    <property type="match status" value="1"/>
</dbReference>
<dbReference type="PROSITE" id="PS50089">
    <property type="entry name" value="ZF_RING_2"/>
    <property type="match status" value="1"/>
</dbReference>
<protein>
    <recommendedName>
        <fullName>Bifunctional apoptosis regulator</fullName>
        <ecNumber evidence="1">2.3.2.27</ecNumber>
    </recommendedName>
</protein>
<name>BFAR_RAT</name>
<sequence>MEEPQKNDLSMRGQEEDHPVRSSGPQISVSEFSCHCCYDTLVNPTTLNCGHSFCRHCLALWWMSSKKTECPECREKWEGFPKVNILLRDAIEKLFPDAIKMRVEDIQQNNDVVQSLAAFQKYGNDQNPLAPSTGRVNQQRGGGFFSGVLTALTGVAVILLVYHWRSRESEHGLLVHKAVDKWTTEEVVLWLEQLGPWASLYRDRFLSERVNGRLLLTLTEEEFSRAPYTIENSSHRRVILMELERVRALGVKPPQNLWEYKAVNPGRSLFLLYALKSSPRLGLLYLYLFDYTDSFLPFIHTICPLQEDSFGEDIFTKLLDLREPTWKQWREFLIKYSFLPYQLIAEFAWDWLEVHYWTSRFLIVNAMLLSVLELFSFWRIWSRSELKTVPQRMWSHFWKVSTQGLFMAMFWPLIPQFVCNCLFYWALYFNPIINIDLVVKEIRRLETQVF</sequence>
<gene>
    <name type="primary">Bfar</name>
</gene>
<feature type="chain" id="PRO_0000055824" description="Bifunctional apoptosis regulator">
    <location>
        <begin position="1"/>
        <end position="450"/>
    </location>
</feature>
<feature type="topological domain" description="Cytoplasmic" evidence="2">
    <location>
        <begin position="1"/>
        <end position="140"/>
    </location>
</feature>
<feature type="transmembrane region" description="Helical" evidence="2">
    <location>
        <begin position="141"/>
        <end position="161"/>
    </location>
</feature>
<feature type="topological domain" description="Extracellular" evidence="2">
    <location>
        <begin position="162"/>
        <end position="331"/>
    </location>
</feature>
<feature type="transmembrane region" description="Helical" evidence="2">
    <location>
        <begin position="332"/>
        <end position="352"/>
    </location>
</feature>
<feature type="topological domain" description="Cytoplasmic" evidence="2">
    <location>
        <begin position="353"/>
        <end position="360"/>
    </location>
</feature>
<feature type="transmembrane region" description="Helical" evidence="2">
    <location>
        <begin position="361"/>
        <end position="381"/>
    </location>
</feature>
<feature type="topological domain" description="Extracellular" evidence="2">
    <location>
        <begin position="382"/>
        <end position="404"/>
    </location>
</feature>
<feature type="transmembrane region" description="Helical" evidence="2">
    <location>
        <begin position="405"/>
        <end position="425"/>
    </location>
</feature>
<feature type="topological domain" description="Cytoplasmic" evidence="2">
    <location>
        <begin position="426"/>
        <end position="450"/>
    </location>
</feature>
<feature type="domain" description="SAM" evidence="4">
    <location>
        <begin position="182"/>
        <end position="249"/>
    </location>
</feature>
<feature type="zinc finger region" description="RING-type" evidence="3">
    <location>
        <begin position="34"/>
        <end position="74"/>
    </location>
</feature>
<feature type="region of interest" description="Disordered" evidence="5">
    <location>
        <begin position="1"/>
        <end position="24"/>
    </location>
</feature>
<feature type="glycosylation site" description="N-linked (GlcNAc...) asparagine" evidence="2">
    <location>
        <position position="232"/>
    </location>
</feature>
<comment type="function">
    <text evidence="1">Membrane-bound E3 ubiquitin ligase that plays a role in several processes including apoptosis regulation or reticulum endoplasmic stress. Has anti-apoptotic activity, both for apoptosis triggered via death-receptors and via mitochondrial factors. Contributes to the dynamic control of IRE1/ERN1 signaling during ER stress by inducing BAX inhibitor 1/TMBIM6 proteasomal degradation. Promotes the activation of TGF-beta signaling by mediating the 'Lys-63'-linked ubiquitination of TGFBR1 which is critical to activate the pathway. Together with NGFR, negatively regulates NF-kappa-B and JNK-related signaling pathways. Promotes the proteasome-mediated degradation of PNPLA3, a protein involveld in lipid metabolism.</text>
</comment>
<comment type="catalytic activity">
    <reaction evidence="1">
        <text>S-ubiquitinyl-[E2 ubiquitin-conjugating enzyme]-L-cysteine + [acceptor protein]-L-lysine = [E2 ubiquitin-conjugating enzyme]-L-cysteine + N(6)-ubiquitinyl-[acceptor protein]-L-lysine.</text>
        <dbReference type="EC" id="2.3.2.27"/>
    </reaction>
</comment>
<comment type="subunit">
    <text evidence="1">Interacts with CASP8, BCL2 and BCL2L1 through SAM domain and also with HIP1, IFT57, ESRRBL1 and BCAP31. Interacts with NGFR; this interaction inhibits NF-kappa-B and JNK-related signaling pathways.</text>
</comment>
<comment type="subcellular location">
    <subcellularLocation>
        <location evidence="1">Endoplasmic reticulum membrane</location>
        <topology evidence="1">Multi-pass membrane protein</topology>
    </subcellularLocation>
</comment>
<comment type="PTM">
    <text evidence="1">Mediates RING-dependent self-ubiquitination leading to proteasomal degradation.</text>
</comment>